<comment type="function">
    <text evidence="1">ATPase which is responsible for recognizing, binding, unfolding and translocation of pupylated proteins into the bacterial 20S proteasome core particle. May be essential for opening the gate of the 20S proteasome via an interaction with its C-terminus, thereby allowing substrate entry and access to the site of proteolysis. Thus, the C-termini of the proteasomal ATPase may function like a 'key in a lock' to induce gate opening and therefore regulate proteolysis.</text>
</comment>
<comment type="pathway">
    <text evidence="1">Protein degradation; proteasomal Pup-dependent pathway.</text>
</comment>
<comment type="subunit">
    <text evidence="1">Homohexamer. Assembles into a hexameric ring structure that caps the 20S proteasome core. Strongly interacts with the prokaryotic ubiquitin-like protein Pup through a hydrophobic interface; the interacting region of ARC lies in its N-terminal coiled-coil domain. There is one Pup binding site per ARC hexamer ring. Upon ATP-binding, the C-terminus of ARC interacts with the alpha-rings of the proteasome core, possibly by binding to the intersubunit pockets.</text>
</comment>
<comment type="domain">
    <text evidence="1">Consists of three main regions, an N-terminal coiled-coil domain that binds to protein Pup and functions as a docking station, an interdomain involved in ARC hexamerization, and a C-terminal ATPase domain of the AAA type.</text>
</comment>
<comment type="similarity">
    <text evidence="1">Belongs to the AAA ATPase family.</text>
</comment>
<organism>
    <name type="scientific">Mycobacterium sp. (strain MCS)</name>
    <dbReference type="NCBI Taxonomy" id="164756"/>
    <lineage>
        <taxon>Bacteria</taxon>
        <taxon>Bacillati</taxon>
        <taxon>Actinomycetota</taxon>
        <taxon>Actinomycetes</taxon>
        <taxon>Mycobacteriales</taxon>
        <taxon>Mycobacteriaceae</taxon>
        <taxon>Mycobacterium</taxon>
    </lineage>
</organism>
<name>ARC_MYCSS</name>
<proteinExistence type="inferred from homology"/>
<protein>
    <recommendedName>
        <fullName evidence="1">Proteasome-associated ATPase</fullName>
    </recommendedName>
    <alternativeName>
        <fullName evidence="1">AAA ATPase forming ring-shaped complexes</fullName>
        <shortName evidence="1">ARC</shortName>
    </alternativeName>
    <alternativeName>
        <fullName evidence="1">Mycobacterial proteasome ATPase</fullName>
    </alternativeName>
</protein>
<accession>Q1B795</accession>
<sequence>MSESQRHEAREDGFTTPHESGLSSEDAAELEELRREAAALREQLENAVGPQSGLRSARDVHQLEARIDSLAARNAKLMDTLKEARQQLLALREEVDRLGQPPSGYGVLLASHEDDTVDVFTSGRKMRLTCSPNIDVKALKQGQTVRLNEALTVVEAGTFEAVGEISTLREILSDGHRALVVGHADEERIVWLAEPLVSVEHLPDNEVAGPELDDDRPRRLRPGDSLLVDTKAGYAFERIPKAEVEDLVLEEVPDVSYSDIGGLTRQIEQIRDAVELPFLHKDLYREYSLRPPKGVLLYGPPGCGKTLIAKAVANSLAKKMAEVRGDDAREAKSYFLNIKGPELLNKFVGETERHIRLIFQRAREKASEGTPVIVFFDEMDSIFRTRGTGVSSDVETTVVPQLLSEIDGVEGLENVIVIGASNREDMIDPAILRPGRLDVKIKIERPDAEAAQDIFSKYLTEELPVNEDDLAEFGGDRSLTIKAMIEKVVDRMYAEIDDNRFLEVTYANGDKEVMYFKDFNSGAMIQNVVDRAKKYAIKSVLETGQKGLRIQHLLDSIVDEFAENEDLPNTTNPDDWARISGKKGERIVYIRTLVTGKSSSANRAIDTESNLGQYL</sequence>
<dbReference type="EMBL" id="CP000384">
    <property type="protein sequence ID" value="ABG09239.1"/>
    <property type="molecule type" value="Genomic_DNA"/>
</dbReference>
<dbReference type="SMR" id="Q1B795"/>
<dbReference type="KEGG" id="mmc:Mmcs_3132"/>
<dbReference type="HOGENOM" id="CLU_036054_0_0_11"/>
<dbReference type="BioCyc" id="MSP164756:G1G6O-3197-MONOMER"/>
<dbReference type="UniPathway" id="UPA00997"/>
<dbReference type="GO" id="GO:0000502">
    <property type="term" value="C:proteasome complex"/>
    <property type="evidence" value="ECO:0007669"/>
    <property type="project" value="UniProtKB-KW"/>
</dbReference>
<dbReference type="GO" id="GO:0005524">
    <property type="term" value="F:ATP binding"/>
    <property type="evidence" value="ECO:0007669"/>
    <property type="project" value="UniProtKB-UniRule"/>
</dbReference>
<dbReference type="GO" id="GO:0016887">
    <property type="term" value="F:ATP hydrolysis activity"/>
    <property type="evidence" value="ECO:0007669"/>
    <property type="project" value="UniProtKB-UniRule"/>
</dbReference>
<dbReference type="GO" id="GO:0019941">
    <property type="term" value="P:modification-dependent protein catabolic process"/>
    <property type="evidence" value="ECO:0007669"/>
    <property type="project" value="InterPro"/>
</dbReference>
<dbReference type="GO" id="GO:0010498">
    <property type="term" value="P:proteasomal protein catabolic process"/>
    <property type="evidence" value="ECO:0007669"/>
    <property type="project" value="InterPro"/>
</dbReference>
<dbReference type="FunFam" id="1.20.5.170:FF:000018">
    <property type="entry name" value="AAA ATPase forming ring-shaped complexes"/>
    <property type="match status" value="1"/>
</dbReference>
<dbReference type="FunFam" id="2.40.50.140:FF:000169">
    <property type="entry name" value="AAA ATPase forming ring-shaped complexes"/>
    <property type="match status" value="1"/>
</dbReference>
<dbReference type="FunFam" id="3.40.50.300:FF:000155">
    <property type="entry name" value="AAA ATPase forming ring-shaped complexes"/>
    <property type="match status" value="1"/>
</dbReference>
<dbReference type="Gene3D" id="1.10.8.60">
    <property type="match status" value="1"/>
</dbReference>
<dbReference type="Gene3D" id="1.20.5.170">
    <property type="match status" value="1"/>
</dbReference>
<dbReference type="Gene3D" id="2.40.50.140">
    <property type="entry name" value="Nucleic acid-binding proteins"/>
    <property type="match status" value="2"/>
</dbReference>
<dbReference type="Gene3D" id="3.40.50.300">
    <property type="entry name" value="P-loop containing nucleotide triphosphate hydrolases"/>
    <property type="match status" value="1"/>
</dbReference>
<dbReference type="HAMAP" id="MF_02112">
    <property type="entry name" value="ARC_ATPase"/>
    <property type="match status" value="1"/>
</dbReference>
<dbReference type="InterPro" id="IPR003593">
    <property type="entry name" value="AAA+_ATPase"/>
</dbReference>
<dbReference type="InterPro" id="IPR050168">
    <property type="entry name" value="AAA_ATPase_domain"/>
</dbReference>
<dbReference type="InterPro" id="IPR003959">
    <property type="entry name" value="ATPase_AAA_core"/>
</dbReference>
<dbReference type="InterPro" id="IPR003960">
    <property type="entry name" value="ATPase_AAA_CS"/>
</dbReference>
<dbReference type="InterPro" id="IPR012340">
    <property type="entry name" value="NA-bd_OB-fold"/>
</dbReference>
<dbReference type="InterPro" id="IPR027417">
    <property type="entry name" value="P-loop_NTPase"/>
</dbReference>
<dbReference type="InterPro" id="IPR032501">
    <property type="entry name" value="Prot_ATP_ID_OB_2nd"/>
</dbReference>
<dbReference type="InterPro" id="IPR041626">
    <property type="entry name" value="Prot_ATP_ID_OB_N"/>
</dbReference>
<dbReference type="InterPro" id="IPR022482">
    <property type="entry name" value="Proteasome_ATPase"/>
</dbReference>
<dbReference type="NCBIfam" id="TIGR03689">
    <property type="entry name" value="pup_AAA"/>
    <property type="match status" value="1"/>
</dbReference>
<dbReference type="PANTHER" id="PTHR23077">
    <property type="entry name" value="AAA-FAMILY ATPASE"/>
    <property type="match status" value="1"/>
</dbReference>
<dbReference type="PANTHER" id="PTHR23077:SF144">
    <property type="entry name" value="PROTEASOME-ASSOCIATED ATPASE"/>
    <property type="match status" value="1"/>
</dbReference>
<dbReference type="Pfam" id="PF00004">
    <property type="entry name" value="AAA"/>
    <property type="match status" value="1"/>
</dbReference>
<dbReference type="Pfam" id="PF16450">
    <property type="entry name" value="Prot_ATP_ID_OB_C"/>
    <property type="match status" value="1"/>
</dbReference>
<dbReference type="Pfam" id="PF17758">
    <property type="entry name" value="Prot_ATP_ID_OB_N"/>
    <property type="match status" value="1"/>
</dbReference>
<dbReference type="SMART" id="SM00382">
    <property type="entry name" value="AAA"/>
    <property type="match status" value="1"/>
</dbReference>
<dbReference type="SUPFAM" id="SSF52540">
    <property type="entry name" value="P-loop containing nucleoside triphosphate hydrolases"/>
    <property type="match status" value="1"/>
</dbReference>
<dbReference type="PROSITE" id="PS00674">
    <property type="entry name" value="AAA"/>
    <property type="match status" value="1"/>
</dbReference>
<reference key="1">
    <citation type="submission" date="2006-06" db="EMBL/GenBank/DDBJ databases">
        <title>Complete sequence of chromosome of Mycobacterium sp. MCS.</title>
        <authorList>
            <consortium name="US DOE Joint Genome Institute"/>
            <person name="Copeland A."/>
            <person name="Lucas S."/>
            <person name="Lapidus A."/>
            <person name="Barry K."/>
            <person name="Detter J.C."/>
            <person name="Glavina del Rio T."/>
            <person name="Hammon N."/>
            <person name="Israni S."/>
            <person name="Dalin E."/>
            <person name="Tice H."/>
            <person name="Pitluck S."/>
            <person name="Martinez M."/>
            <person name="Schmutz J."/>
            <person name="Larimer F."/>
            <person name="Land M."/>
            <person name="Hauser L."/>
            <person name="Kyrpides N."/>
            <person name="Kim E."/>
            <person name="Miller C.D."/>
            <person name="Hughes J.E."/>
            <person name="Anderson A.J."/>
            <person name="Sims R.C."/>
            <person name="Richardson P."/>
        </authorList>
    </citation>
    <scope>NUCLEOTIDE SEQUENCE [LARGE SCALE GENOMIC DNA]</scope>
    <source>
        <strain>MCS</strain>
    </source>
</reference>
<evidence type="ECO:0000255" key="1">
    <source>
        <dbReference type="HAMAP-Rule" id="MF_02112"/>
    </source>
</evidence>
<evidence type="ECO:0000256" key="2">
    <source>
        <dbReference type="SAM" id="MobiDB-lite"/>
    </source>
</evidence>
<gene>
    <name evidence="1" type="primary">mpa</name>
    <name type="ordered locus">Mmcs_3132</name>
</gene>
<keyword id="KW-0067">ATP-binding</keyword>
<keyword id="KW-0143">Chaperone</keyword>
<keyword id="KW-0175">Coiled coil</keyword>
<keyword id="KW-0547">Nucleotide-binding</keyword>
<keyword id="KW-0647">Proteasome</keyword>
<feature type="chain" id="PRO_0000397002" description="Proteasome-associated ATPase">
    <location>
        <begin position="1"/>
        <end position="615"/>
    </location>
</feature>
<feature type="region of interest" description="Disordered" evidence="2">
    <location>
        <begin position="1"/>
        <end position="32"/>
    </location>
</feature>
<feature type="region of interest" description="Docks into pockets in the proteasome alpha-ring" evidence="1">
    <location>
        <begin position="614"/>
        <end position="615"/>
    </location>
</feature>
<feature type="coiled-coil region" evidence="1">
    <location>
        <begin position="22"/>
        <end position="100"/>
    </location>
</feature>
<feature type="compositionally biased region" description="Basic and acidic residues" evidence="2">
    <location>
        <begin position="1"/>
        <end position="13"/>
    </location>
</feature>
<feature type="binding site" evidence="1">
    <location>
        <begin position="302"/>
        <end position="307"/>
    </location>
    <ligand>
        <name>ATP</name>
        <dbReference type="ChEBI" id="CHEBI:30616"/>
    </ligand>
</feature>